<feature type="chain" id="PRO_5000256966" description="Na(+)/H(+) antiporter subunit G1">
    <location>
        <begin position="1"/>
        <end position="118"/>
    </location>
</feature>
<feature type="transmembrane region" description="Helical" evidence="2">
    <location>
        <begin position="4"/>
        <end position="24"/>
    </location>
</feature>
<feature type="transmembrane region" description="Helical" evidence="2">
    <location>
        <begin position="38"/>
        <end position="58"/>
    </location>
</feature>
<feature type="transmembrane region" description="Helical" evidence="2">
    <location>
        <begin position="60"/>
        <end position="80"/>
    </location>
</feature>
<gene>
    <name type="primary">mnhG1</name>
    <name type="ordered locus">SaurJH1_0965</name>
</gene>
<proteinExistence type="inferred from homology"/>
<reference key="1">
    <citation type="submission" date="2007-06" db="EMBL/GenBank/DDBJ databases">
        <title>Complete sequence of chromosome of Staphylococcus aureus subsp. aureus JH1.</title>
        <authorList>
            <consortium name="US DOE Joint Genome Institute"/>
            <person name="Copeland A."/>
            <person name="Lucas S."/>
            <person name="Lapidus A."/>
            <person name="Barry K."/>
            <person name="Detter J.C."/>
            <person name="Glavina del Rio T."/>
            <person name="Hammon N."/>
            <person name="Israni S."/>
            <person name="Dalin E."/>
            <person name="Tice H."/>
            <person name="Pitluck S."/>
            <person name="Chain P."/>
            <person name="Malfatti S."/>
            <person name="Shin M."/>
            <person name="Vergez L."/>
            <person name="Schmutz J."/>
            <person name="Larimer F."/>
            <person name="Land M."/>
            <person name="Hauser L."/>
            <person name="Kyrpides N."/>
            <person name="Ivanova N."/>
            <person name="Tomasz A."/>
            <person name="Richardson P."/>
        </authorList>
    </citation>
    <scope>NUCLEOTIDE SEQUENCE [LARGE SCALE GENOMIC DNA]</scope>
    <source>
        <strain>JH1</strain>
    </source>
</reference>
<protein>
    <recommendedName>
        <fullName>Na(+)/H(+) antiporter subunit G1</fullName>
    </recommendedName>
    <alternativeName>
        <fullName>Mnh complex subunit G1</fullName>
    </alternativeName>
</protein>
<sequence>MIKIILISLALIFVIIGALISALAAIGLLRLEDVYSRAHAAGKASTLGAMSLLFGTFLYFIATQGFVNMQLIVAIIFVLITGPLSSHMIMKAAYNIKTPYTKKTKVDEISEDLKDTKL</sequence>
<keyword id="KW-0050">Antiport</keyword>
<keyword id="KW-1003">Cell membrane</keyword>
<keyword id="KW-0375">Hydrogen ion transport</keyword>
<keyword id="KW-0406">Ion transport</keyword>
<keyword id="KW-0472">Membrane</keyword>
<keyword id="KW-0915">Sodium</keyword>
<keyword id="KW-0739">Sodium transport</keyword>
<keyword id="KW-0812">Transmembrane</keyword>
<keyword id="KW-1133">Transmembrane helix</keyword>
<keyword id="KW-0813">Transport</keyword>
<evidence type="ECO:0000250" key="1"/>
<evidence type="ECO:0000255" key="2"/>
<evidence type="ECO:0000305" key="3"/>
<comment type="function">
    <text evidence="1">Mnh complex is a Na(+)/H(+) antiporter involved in Na(+) excretion.</text>
</comment>
<comment type="subunit">
    <text evidence="1">May form a heterooligomeric complex that consists of seven subunits: mnhA1, mnhB1, mnhC1, mnhD1, mnhE1, mnhF1 and mnhG1.</text>
</comment>
<comment type="subcellular location">
    <subcellularLocation>
        <location evidence="3">Cell membrane</location>
        <topology evidence="3">Multi-pass membrane protein</topology>
    </subcellularLocation>
</comment>
<comment type="similarity">
    <text evidence="3">Belongs to the CPA3 antiporters (TC 2.A.63) subunit G family.</text>
</comment>
<accession>A6U053</accession>
<dbReference type="EMBL" id="CP000736">
    <property type="protein sequence ID" value="ABR51821.1"/>
    <property type="molecule type" value="Genomic_DNA"/>
</dbReference>
<dbReference type="SMR" id="A6U053"/>
<dbReference type="KEGG" id="sah:SaurJH1_0965"/>
<dbReference type="HOGENOM" id="CLU_121334_0_3_9"/>
<dbReference type="GO" id="GO:0005886">
    <property type="term" value="C:plasma membrane"/>
    <property type="evidence" value="ECO:0007669"/>
    <property type="project" value="UniProtKB-SubCell"/>
</dbReference>
<dbReference type="GO" id="GO:0015385">
    <property type="term" value="F:sodium:proton antiporter activity"/>
    <property type="evidence" value="ECO:0007669"/>
    <property type="project" value="TreeGrafter"/>
</dbReference>
<dbReference type="InterPro" id="IPR005133">
    <property type="entry name" value="PhaG_MnhG_YufB"/>
</dbReference>
<dbReference type="NCBIfam" id="TIGR01300">
    <property type="entry name" value="CPA3_mnhG_phaG"/>
    <property type="match status" value="1"/>
</dbReference>
<dbReference type="NCBIfam" id="NF009237">
    <property type="entry name" value="PRK12587.1"/>
    <property type="match status" value="1"/>
</dbReference>
<dbReference type="NCBIfam" id="NF009314">
    <property type="entry name" value="PRK12674.1-2"/>
    <property type="match status" value="1"/>
</dbReference>
<dbReference type="PANTHER" id="PTHR34703">
    <property type="entry name" value="ANTIPORTER SUBUNIT MNHG2-RELATED"/>
    <property type="match status" value="1"/>
</dbReference>
<dbReference type="PANTHER" id="PTHR34703:SF1">
    <property type="entry name" value="ANTIPORTER SUBUNIT MNHG2-RELATED"/>
    <property type="match status" value="1"/>
</dbReference>
<dbReference type="Pfam" id="PF03334">
    <property type="entry name" value="PhaG_MnhG_YufB"/>
    <property type="match status" value="1"/>
</dbReference>
<name>MNHG1_STAA2</name>
<organism>
    <name type="scientific">Staphylococcus aureus (strain JH1)</name>
    <dbReference type="NCBI Taxonomy" id="359787"/>
    <lineage>
        <taxon>Bacteria</taxon>
        <taxon>Bacillati</taxon>
        <taxon>Bacillota</taxon>
        <taxon>Bacilli</taxon>
        <taxon>Bacillales</taxon>
        <taxon>Staphylococcaceae</taxon>
        <taxon>Staphylococcus</taxon>
    </lineage>
</organism>